<proteinExistence type="inferred from homology"/>
<organism>
    <name type="scientific">Streptococcus equi subsp. zooepidemicus (strain MGCS10565)</name>
    <dbReference type="NCBI Taxonomy" id="552526"/>
    <lineage>
        <taxon>Bacteria</taxon>
        <taxon>Bacillati</taxon>
        <taxon>Bacillota</taxon>
        <taxon>Bacilli</taxon>
        <taxon>Lactobacillales</taxon>
        <taxon>Streptococcaceae</taxon>
        <taxon>Streptococcus</taxon>
    </lineage>
</organism>
<accession>B4U2E1</accession>
<evidence type="ECO:0000255" key="1">
    <source>
        <dbReference type="HAMAP-Rule" id="MF_01347"/>
    </source>
</evidence>
<dbReference type="EC" id="7.1.2.2" evidence="1"/>
<dbReference type="EMBL" id="CP001129">
    <property type="protein sequence ID" value="ACG62158.1"/>
    <property type="molecule type" value="Genomic_DNA"/>
</dbReference>
<dbReference type="RefSeq" id="WP_012515432.1">
    <property type="nucleotide sequence ID" value="NC_011134.1"/>
</dbReference>
<dbReference type="SMR" id="B4U2E1"/>
<dbReference type="KEGG" id="sez:Sez_0798"/>
<dbReference type="HOGENOM" id="CLU_022398_0_2_9"/>
<dbReference type="Proteomes" id="UP000001873">
    <property type="component" value="Chromosome"/>
</dbReference>
<dbReference type="GO" id="GO:0005886">
    <property type="term" value="C:plasma membrane"/>
    <property type="evidence" value="ECO:0007669"/>
    <property type="project" value="UniProtKB-SubCell"/>
</dbReference>
<dbReference type="GO" id="GO:0045259">
    <property type="term" value="C:proton-transporting ATP synthase complex"/>
    <property type="evidence" value="ECO:0007669"/>
    <property type="project" value="UniProtKB-KW"/>
</dbReference>
<dbReference type="GO" id="GO:0005524">
    <property type="term" value="F:ATP binding"/>
    <property type="evidence" value="ECO:0007669"/>
    <property type="project" value="UniProtKB-UniRule"/>
</dbReference>
<dbReference type="GO" id="GO:0016887">
    <property type="term" value="F:ATP hydrolysis activity"/>
    <property type="evidence" value="ECO:0007669"/>
    <property type="project" value="InterPro"/>
</dbReference>
<dbReference type="GO" id="GO:0046933">
    <property type="term" value="F:proton-transporting ATP synthase activity, rotational mechanism"/>
    <property type="evidence" value="ECO:0007669"/>
    <property type="project" value="UniProtKB-UniRule"/>
</dbReference>
<dbReference type="CDD" id="cd18110">
    <property type="entry name" value="ATP-synt_F1_beta_C"/>
    <property type="match status" value="1"/>
</dbReference>
<dbReference type="CDD" id="cd18115">
    <property type="entry name" value="ATP-synt_F1_beta_N"/>
    <property type="match status" value="1"/>
</dbReference>
<dbReference type="CDD" id="cd01133">
    <property type="entry name" value="F1-ATPase_beta_CD"/>
    <property type="match status" value="1"/>
</dbReference>
<dbReference type="FunFam" id="1.10.1140.10:FF:000001">
    <property type="entry name" value="ATP synthase subunit beta"/>
    <property type="match status" value="1"/>
</dbReference>
<dbReference type="FunFam" id="2.40.10.170:FF:000005">
    <property type="entry name" value="ATP synthase subunit beta"/>
    <property type="match status" value="1"/>
</dbReference>
<dbReference type="FunFam" id="3.40.50.300:FF:000004">
    <property type="entry name" value="ATP synthase subunit beta"/>
    <property type="match status" value="1"/>
</dbReference>
<dbReference type="Gene3D" id="2.40.10.170">
    <property type="match status" value="1"/>
</dbReference>
<dbReference type="Gene3D" id="1.10.1140.10">
    <property type="entry name" value="Bovine Mitochondrial F1-atpase, Atp Synthase Beta Chain, Chain D, domain 3"/>
    <property type="match status" value="1"/>
</dbReference>
<dbReference type="Gene3D" id="3.40.50.300">
    <property type="entry name" value="P-loop containing nucleotide triphosphate hydrolases"/>
    <property type="match status" value="1"/>
</dbReference>
<dbReference type="HAMAP" id="MF_01347">
    <property type="entry name" value="ATP_synth_beta_bact"/>
    <property type="match status" value="1"/>
</dbReference>
<dbReference type="InterPro" id="IPR003593">
    <property type="entry name" value="AAA+_ATPase"/>
</dbReference>
<dbReference type="InterPro" id="IPR055190">
    <property type="entry name" value="ATP-synt_VA_C"/>
</dbReference>
<dbReference type="InterPro" id="IPR005722">
    <property type="entry name" value="ATP_synth_F1_bsu"/>
</dbReference>
<dbReference type="InterPro" id="IPR020003">
    <property type="entry name" value="ATPase_a/bsu_AS"/>
</dbReference>
<dbReference type="InterPro" id="IPR050053">
    <property type="entry name" value="ATPase_alpha/beta_chains"/>
</dbReference>
<dbReference type="InterPro" id="IPR004100">
    <property type="entry name" value="ATPase_F1/V1/A1_a/bsu_N"/>
</dbReference>
<dbReference type="InterPro" id="IPR036121">
    <property type="entry name" value="ATPase_F1/V1/A1_a/bsu_N_sf"/>
</dbReference>
<dbReference type="InterPro" id="IPR000194">
    <property type="entry name" value="ATPase_F1/V1/A1_a/bsu_nucl-bd"/>
</dbReference>
<dbReference type="InterPro" id="IPR024034">
    <property type="entry name" value="ATPase_F1/V1_b/a_C"/>
</dbReference>
<dbReference type="InterPro" id="IPR027417">
    <property type="entry name" value="P-loop_NTPase"/>
</dbReference>
<dbReference type="NCBIfam" id="TIGR01039">
    <property type="entry name" value="atpD"/>
    <property type="match status" value="1"/>
</dbReference>
<dbReference type="PANTHER" id="PTHR15184">
    <property type="entry name" value="ATP SYNTHASE"/>
    <property type="match status" value="1"/>
</dbReference>
<dbReference type="PANTHER" id="PTHR15184:SF71">
    <property type="entry name" value="ATP SYNTHASE SUBUNIT BETA, MITOCHONDRIAL"/>
    <property type="match status" value="1"/>
</dbReference>
<dbReference type="Pfam" id="PF00006">
    <property type="entry name" value="ATP-synt_ab"/>
    <property type="match status" value="1"/>
</dbReference>
<dbReference type="Pfam" id="PF02874">
    <property type="entry name" value="ATP-synt_ab_N"/>
    <property type="match status" value="1"/>
</dbReference>
<dbReference type="Pfam" id="PF22919">
    <property type="entry name" value="ATP-synt_VA_C"/>
    <property type="match status" value="1"/>
</dbReference>
<dbReference type="SMART" id="SM00382">
    <property type="entry name" value="AAA"/>
    <property type="match status" value="1"/>
</dbReference>
<dbReference type="SUPFAM" id="SSF47917">
    <property type="entry name" value="C-terminal domain of alpha and beta subunits of F1 ATP synthase"/>
    <property type="match status" value="1"/>
</dbReference>
<dbReference type="SUPFAM" id="SSF50615">
    <property type="entry name" value="N-terminal domain of alpha and beta subunits of F1 ATP synthase"/>
    <property type="match status" value="1"/>
</dbReference>
<dbReference type="SUPFAM" id="SSF52540">
    <property type="entry name" value="P-loop containing nucleoside triphosphate hydrolases"/>
    <property type="match status" value="1"/>
</dbReference>
<dbReference type="PROSITE" id="PS00152">
    <property type="entry name" value="ATPASE_ALPHA_BETA"/>
    <property type="match status" value="1"/>
</dbReference>
<protein>
    <recommendedName>
        <fullName evidence="1">ATP synthase subunit beta</fullName>
        <ecNumber evidence="1">7.1.2.2</ecNumber>
    </recommendedName>
    <alternativeName>
        <fullName evidence="1">ATP synthase F1 sector subunit beta</fullName>
    </alternativeName>
    <alternativeName>
        <fullName evidence="1">F-ATPase subunit beta</fullName>
    </alternativeName>
</protein>
<comment type="function">
    <text evidence="1">Produces ATP from ADP in the presence of a proton gradient across the membrane. The catalytic sites are hosted primarily by the beta subunits.</text>
</comment>
<comment type="catalytic activity">
    <reaction evidence="1">
        <text>ATP + H2O + 4 H(+)(in) = ADP + phosphate + 5 H(+)(out)</text>
        <dbReference type="Rhea" id="RHEA:57720"/>
        <dbReference type="ChEBI" id="CHEBI:15377"/>
        <dbReference type="ChEBI" id="CHEBI:15378"/>
        <dbReference type="ChEBI" id="CHEBI:30616"/>
        <dbReference type="ChEBI" id="CHEBI:43474"/>
        <dbReference type="ChEBI" id="CHEBI:456216"/>
        <dbReference type="EC" id="7.1.2.2"/>
    </reaction>
</comment>
<comment type="subunit">
    <text evidence="1">F-type ATPases have 2 components, CF(1) - the catalytic core - and CF(0) - the membrane proton channel. CF(1) has five subunits: alpha(3), beta(3), gamma(1), delta(1), epsilon(1). CF(0) has three main subunits: a(1), b(2) and c(9-12). The alpha and beta chains form an alternating ring which encloses part of the gamma chain. CF(1) is attached to CF(0) by a central stalk formed by the gamma and epsilon chains, while a peripheral stalk is formed by the delta and b chains.</text>
</comment>
<comment type="subcellular location">
    <subcellularLocation>
        <location evidence="1">Cell membrane</location>
        <topology evidence="1">Peripheral membrane protein</topology>
    </subcellularLocation>
</comment>
<comment type="similarity">
    <text evidence="1">Belongs to the ATPase alpha/beta chains family.</text>
</comment>
<reference key="1">
    <citation type="journal article" date="2008" name="PLoS ONE">
        <title>Genome sequence of a lancefield group C Streptococcus zooepidemicus strain causing epidemic nephritis: new information about an old disease.</title>
        <authorList>
            <person name="Beres S.B."/>
            <person name="Sesso R."/>
            <person name="Pinto S.W.L."/>
            <person name="Hoe N.P."/>
            <person name="Porcella S.F."/>
            <person name="Deleo F.R."/>
            <person name="Musser J.M."/>
        </authorList>
    </citation>
    <scope>NUCLEOTIDE SEQUENCE [LARGE SCALE GENOMIC DNA]</scope>
    <source>
        <strain>MGCS10565</strain>
    </source>
</reference>
<name>ATPB_STREM</name>
<keyword id="KW-0066">ATP synthesis</keyword>
<keyword id="KW-0067">ATP-binding</keyword>
<keyword id="KW-1003">Cell membrane</keyword>
<keyword id="KW-0139">CF(1)</keyword>
<keyword id="KW-0375">Hydrogen ion transport</keyword>
<keyword id="KW-0406">Ion transport</keyword>
<keyword id="KW-0472">Membrane</keyword>
<keyword id="KW-0547">Nucleotide-binding</keyword>
<keyword id="KW-1278">Translocase</keyword>
<keyword id="KW-0813">Transport</keyword>
<feature type="chain" id="PRO_1000143548" description="ATP synthase subunit beta">
    <location>
        <begin position="1"/>
        <end position="468"/>
    </location>
</feature>
<feature type="binding site" evidence="1">
    <location>
        <begin position="155"/>
        <end position="162"/>
    </location>
    <ligand>
        <name>ATP</name>
        <dbReference type="ChEBI" id="CHEBI:30616"/>
    </ligand>
</feature>
<sequence length="468" mass="50899">MSSGKIAQVVGPVVDVVFASGDKLPEINNALIVYKDGDKKQKIVLEVALELGDGMVRTIAMESTDGLTRGLEVLDTGRAISVPVGKETLGRVFNVLGETIDLEAPFADDVNREPIHKKAPAFDELSTSSEILETGIKVIDLLAPYLKGGKVGLFGGAGVGKTVLIQELIHNIAQEHGGISVFTGVGERTREGNDLYWEMKESGVIEKTAMVFGQMNEPPGARMRVALTGLTIAEYFRDVEGQDVLLFIDNIFRFTQAGSEVSALLGRMPSAVGYQPTLATEMGQLQERITSTKKGSVTSIQAIYVPADDYTDPAPATAFAHLDSTTNLERKLTQMGIYPAVDPLASSSRALSPEIVGEEHYAVATEVQRVLQRYRELQDIIAILGMDELSEEEKTLVGRARRIQFFLSQNFNVAEQFTGLPGSYVPVAETVRGFKEILEGKHDHLPEDAFRAVGPIEDVIEKAKKMGF</sequence>
<gene>
    <name evidence="1" type="primary">atpD</name>
    <name type="ordered locus">Sez_0798</name>
</gene>